<accession>C5CUN7</accession>
<feature type="chain" id="PRO_1000213458" description="Putative phosphoenolpyruvate synthase regulatory protein">
    <location>
        <begin position="1"/>
        <end position="273"/>
    </location>
</feature>
<feature type="binding site" evidence="1">
    <location>
        <begin position="153"/>
        <end position="160"/>
    </location>
    <ligand>
        <name>ADP</name>
        <dbReference type="ChEBI" id="CHEBI:456216"/>
    </ligand>
</feature>
<sequence length="273" mass="30823">MHTRTVFFISDGTGITAETFGNAVLAQFEMKPRHVRLPFTDTVDKAHQAVRQINHTAELEGVRPIVFTTLANMEVLEVIETGCKGMLLDMFGTFVRPLEIELAVKSNHRIGRFSDVSKSKEYDARIAAIDFSLAHDDGQSNRDLEGADVILVGVSRSGKTPTSLYLAMQHGLKAANYPLIPEDFERKQLPPALMPHRKKIFGLTIQPERLSQIRNERRPDSRYASLENCRNEVSEAEAMMRRAGIRWLSTTTKSIEEIATTILQELKPERLVY</sequence>
<proteinExistence type="inferred from homology"/>
<organism>
    <name type="scientific">Variovorax paradoxus (strain S110)</name>
    <dbReference type="NCBI Taxonomy" id="543728"/>
    <lineage>
        <taxon>Bacteria</taxon>
        <taxon>Pseudomonadati</taxon>
        <taxon>Pseudomonadota</taxon>
        <taxon>Betaproteobacteria</taxon>
        <taxon>Burkholderiales</taxon>
        <taxon>Comamonadaceae</taxon>
        <taxon>Variovorax</taxon>
    </lineage>
</organism>
<gene>
    <name type="ordered locus">Vapar_1815</name>
</gene>
<protein>
    <recommendedName>
        <fullName evidence="1">Putative phosphoenolpyruvate synthase regulatory protein</fullName>
        <shortName evidence="1">PEP synthase regulatory protein</shortName>
        <shortName evidence="1">PSRP</shortName>
        <ecNumber evidence="1">2.7.11.33</ecNumber>
        <ecNumber evidence="1">2.7.4.28</ecNumber>
    </recommendedName>
    <alternativeName>
        <fullName evidence="1">Pyruvate, water dikinase regulatory protein</fullName>
    </alternativeName>
</protein>
<name>PSRP_VARPS</name>
<reference key="1">
    <citation type="journal article" date="2011" name="J. Bacteriol.">
        <title>Complete genome sequence of the metabolically versatile plant growth-promoting endophyte, Variovorax paradoxus S110.</title>
        <authorList>
            <person name="Han J.I."/>
            <person name="Choi H.K."/>
            <person name="Lee S.W."/>
            <person name="Orwin P.M."/>
            <person name="Kim J."/>
            <person name="Laroe S.L."/>
            <person name="Kim T.G."/>
            <person name="O'Neil J."/>
            <person name="Leadbetter J.R."/>
            <person name="Lee S.Y."/>
            <person name="Hur C.G."/>
            <person name="Spain J.C."/>
            <person name="Ovchinnikova G."/>
            <person name="Goodwin L."/>
            <person name="Han C."/>
        </authorList>
    </citation>
    <scope>NUCLEOTIDE SEQUENCE [LARGE SCALE GENOMIC DNA]</scope>
    <source>
        <strain>S110</strain>
    </source>
</reference>
<dbReference type="EC" id="2.7.11.33" evidence="1"/>
<dbReference type="EC" id="2.7.4.28" evidence="1"/>
<dbReference type="EMBL" id="CP001635">
    <property type="protein sequence ID" value="ACS18465.1"/>
    <property type="molecule type" value="Genomic_DNA"/>
</dbReference>
<dbReference type="SMR" id="C5CUN7"/>
<dbReference type="STRING" id="543728.Vapar_1815"/>
<dbReference type="KEGG" id="vap:Vapar_1815"/>
<dbReference type="eggNOG" id="COG1806">
    <property type="taxonomic scope" value="Bacteria"/>
</dbReference>
<dbReference type="HOGENOM" id="CLU_046206_1_0_4"/>
<dbReference type="OrthoDB" id="9782201at2"/>
<dbReference type="GO" id="GO:0043531">
    <property type="term" value="F:ADP binding"/>
    <property type="evidence" value="ECO:0007669"/>
    <property type="project" value="UniProtKB-UniRule"/>
</dbReference>
<dbReference type="GO" id="GO:0005524">
    <property type="term" value="F:ATP binding"/>
    <property type="evidence" value="ECO:0007669"/>
    <property type="project" value="InterPro"/>
</dbReference>
<dbReference type="GO" id="GO:0016776">
    <property type="term" value="F:phosphotransferase activity, phosphate group as acceptor"/>
    <property type="evidence" value="ECO:0007669"/>
    <property type="project" value="UniProtKB-UniRule"/>
</dbReference>
<dbReference type="GO" id="GO:0004674">
    <property type="term" value="F:protein serine/threonine kinase activity"/>
    <property type="evidence" value="ECO:0007669"/>
    <property type="project" value="UniProtKB-UniRule"/>
</dbReference>
<dbReference type="HAMAP" id="MF_01062">
    <property type="entry name" value="PSRP"/>
    <property type="match status" value="1"/>
</dbReference>
<dbReference type="InterPro" id="IPR005177">
    <property type="entry name" value="Kinase-pyrophosphorylase"/>
</dbReference>
<dbReference type="InterPro" id="IPR026530">
    <property type="entry name" value="PSRP"/>
</dbReference>
<dbReference type="NCBIfam" id="NF003742">
    <property type="entry name" value="PRK05339.1"/>
    <property type="match status" value="1"/>
</dbReference>
<dbReference type="PANTHER" id="PTHR31756">
    <property type="entry name" value="PYRUVATE, PHOSPHATE DIKINASE REGULATORY PROTEIN 1, CHLOROPLASTIC"/>
    <property type="match status" value="1"/>
</dbReference>
<dbReference type="PANTHER" id="PTHR31756:SF3">
    <property type="entry name" value="PYRUVATE, PHOSPHATE DIKINASE REGULATORY PROTEIN 1, CHLOROPLASTIC"/>
    <property type="match status" value="1"/>
</dbReference>
<dbReference type="Pfam" id="PF03618">
    <property type="entry name" value="Kinase-PPPase"/>
    <property type="match status" value="1"/>
</dbReference>
<comment type="function">
    <text evidence="1">Bifunctional serine/threonine kinase and phosphorylase involved in the regulation of the phosphoenolpyruvate synthase (PEPS) by catalyzing its phosphorylation/dephosphorylation.</text>
</comment>
<comment type="catalytic activity">
    <reaction evidence="1">
        <text>[pyruvate, water dikinase] + ADP = [pyruvate, water dikinase]-phosphate + AMP + H(+)</text>
        <dbReference type="Rhea" id="RHEA:46020"/>
        <dbReference type="Rhea" id="RHEA-COMP:11425"/>
        <dbReference type="Rhea" id="RHEA-COMP:11426"/>
        <dbReference type="ChEBI" id="CHEBI:15378"/>
        <dbReference type="ChEBI" id="CHEBI:43176"/>
        <dbReference type="ChEBI" id="CHEBI:68546"/>
        <dbReference type="ChEBI" id="CHEBI:456215"/>
        <dbReference type="ChEBI" id="CHEBI:456216"/>
        <dbReference type="EC" id="2.7.11.33"/>
    </reaction>
</comment>
<comment type="catalytic activity">
    <reaction evidence="1">
        <text>[pyruvate, water dikinase]-phosphate + phosphate + H(+) = [pyruvate, water dikinase] + diphosphate</text>
        <dbReference type="Rhea" id="RHEA:48580"/>
        <dbReference type="Rhea" id="RHEA-COMP:11425"/>
        <dbReference type="Rhea" id="RHEA-COMP:11426"/>
        <dbReference type="ChEBI" id="CHEBI:15378"/>
        <dbReference type="ChEBI" id="CHEBI:33019"/>
        <dbReference type="ChEBI" id="CHEBI:43176"/>
        <dbReference type="ChEBI" id="CHEBI:43474"/>
        <dbReference type="ChEBI" id="CHEBI:68546"/>
        <dbReference type="EC" id="2.7.4.28"/>
    </reaction>
</comment>
<comment type="similarity">
    <text evidence="1">Belongs to the pyruvate, phosphate/water dikinase regulatory protein family. PSRP subfamily.</text>
</comment>
<keyword id="KW-0418">Kinase</keyword>
<keyword id="KW-0547">Nucleotide-binding</keyword>
<keyword id="KW-0723">Serine/threonine-protein kinase</keyword>
<keyword id="KW-0808">Transferase</keyword>
<evidence type="ECO:0000255" key="1">
    <source>
        <dbReference type="HAMAP-Rule" id="MF_01062"/>
    </source>
</evidence>